<evidence type="ECO:0000250" key="1"/>
<evidence type="ECO:0000305" key="2"/>
<protein>
    <recommendedName>
        <fullName>Ubiquitin-fold modifier-conjugating enzyme 1</fullName>
    </recommendedName>
    <alternativeName>
        <fullName>Ufm1-conjugating enzyme 1</fullName>
    </alternativeName>
</protein>
<gene>
    <name type="ORF">GA21037</name>
</gene>
<organism>
    <name type="scientific">Drosophila pseudoobscura pseudoobscura</name>
    <name type="common">Fruit fly</name>
    <dbReference type="NCBI Taxonomy" id="46245"/>
    <lineage>
        <taxon>Eukaryota</taxon>
        <taxon>Metazoa</taxon>
        <taxon>Ecdysozoa</taxon>
        <taxon>Arthropoda</taxon>
        <taxon>Hexapoda</taxon>
        <taxon>Insecta</taxon>
        <taxon>Pterygota</taxon>
        <taxon>Neoptera</taxon>
        <taxon>Endopterygota</taxon>
        <taxon>Diptera</taxon>
        <taxon>Brachycera</taxon>
        <taxon>Muscomorpha</taxon>
        <taxon>Ephydroidea</taxon>
        <taxon>Drosophilidae</taxon>
        <taxon>Drosophila</taxon>
        <taxon>Sophophora</taxon>
    </lineage>
</organism>
<name>UFC1_DROPS</name>
<accession>Q28X71</accession>
<proteinExistence type="inferred from homology"/>
<keyword id="KW-1185">Reference proteome</keyword>
<keyword id="KW-0833">Ubl conjugation pathway</keyword>
<reference key="1">
    <citation type="journal article" date="2005" name="Genome Res.">
        <title>Comparative genome sequencing of Drosophila pseudoobscura: chromosomal, gene, and cis-element evolution.</title>
        <authorList>
            <person name="Richards S."/>
            <person name="Liu Y."/>
            <person name="Bettencourt B.R."/>
            <person name="Hradecky P."/>
            <person name="Letovsky S."/>
            <person name="Nielsen R."/>
            <person name="Thornton K."/>
            <person name="Hubisz M.J."/>
            <person name="Chen R."/>
            <person name="Meisel R.P."/>
            <person name="Couronne O."/>
            <person name="Hua S."/>
            <person name="Smith M.A."/>
            <person name="Zhang P."/>
            <person name="Liu J."/>
            <person name="Bussemaker H.J."/>
            <person name="van Batenburg M.F."/>
            <person name="Howells S.L."/>
            <person name="Scherer S.E."/>
            <person name="Sodergren E."/>
            <person name="Matthews B.B."/>
            <person name="Crosby M.A."/>
            <person name="Schroeder A.J."/>
            <person name="Ortiz-Barrientos D."/>
            <person name="Rives C.M."/>
            <person name="Metzker M.L."/>
            <person name="Muzny D.M."/>
            <person name="Scott G."/>
            <person name="Steffen D."/>
            <person name="Wheeler D.A."/>
            <person name="Worley K.C."/>
            <person name="Havlak P."/>
            <person name="Durbin K.J."/>
            <person name="Egan A."/>
            <person name="Gill R."/>
            <person name="Hume J."/>
            <person name="Morgan M.B."/>
            <person name="Miner G."/>
            <person name="Hamilton C."/>
            <person name="Huang Y."/>
            <person name="Waldron L."/>
            <person name="Verduzco D."/>
            <person name="Clerc-Blankenburg K.P."/>
            <person name="Dubchak I."/>
            <person name="Noor M.A.F."/>
            <person name="Anderson W."/>
            <person name="White K.P."/>
            <person name="Clark A.G."/>
            <person name="Schaeffer S.W."/>
            <person name="Gelbart W.M."/>
            <person name="Weinstock G.M."/>
            <person name="Gibbs R.A."/>
        </authorList>
    </citation>
    <scope>NUCLEOTIDE SEQUENCE [LARGE SCALE GENOMIC DNA]</scope>
    <source>
        <strain>MV2-25 / Tucson 14011-0121.94</strain>
    </source>
</reference>
<feature type="chain" id="PRO_0000391973" description="Ubiquitin-fold modifier-conjugating enzyme 1">
    <location>
        <begin position="1"/>
        <end position="164"/>
    </location>
</feature>
<feature type="active site" description="Glycyl thioester intermediate" evidence="1">
    <location>
        <position position="116"/>
    </location>
</feature>
<sequence length="164" mass="19001">MVDDSTRKTLSNIPLLQIRAGPREKDVWVQRLKEEYHALIMYVKNNKQSGSDWFRLESNKEGTKWFGKCWYMHNLLKYEFDVEFDIPVTYPTTAPEIALPELDGKTAKMYRGGKICLTDHFKPLWARNVPKFGIAHAMALGLAPWLAVEVPDLIEKGIITYKEK</sequence>
<comment type="function">
    <text evidence="1">E2-like enzyme which forms an intermediate with UFM1 via a thioester linkage.</text>
</comment>
<comment type="similarity">
    <text evidence="2">Belongs to the ubiquitin-conjugating enzyme family. UFC1 subfamily.</text>
</comment>
<dbReference type="EMBL" id="CM000071">
    <property type="protein sequence ID" value="EAL26445.1"/>
    <property type="molecule type" value="Genomic_DNA"/>
</dbReference>
<dbReference type="RefSeq" id="XP_001361866.1">
    <property type="nucleotide sequence ID" value="XM_001361829.4"/>
</dbReference>
<dbReference type="SMR" id="Q28X71"/>
<dbReference type="FunCoup" id="Q28X71">
    <property type="interactions" value="1567"/>
</dbReference>
<dbReference type="STRING" id="46245.Q28X71"/>
<dbReference type="EnsemblMetazoa" id="FBtr0277451">
    <property type="protein sequence ID" value="FBpp0275889"/>
    <property type="gene ID" value="FBgn0081025"/>
</dbReference>
<dbReference type="KEGG" id="dpo:4805471"/>
<dbReference type="CTD" id="51506"/>
<dbReference type="eggNOG" id="KOG3357">
    <property type="taxonomic scope" value="Eukaryota"/>
</dbReference>
<dbReference type="HOGENOM" id="CLU_101170_0_0_1"/>
<dbReference type="InParanoid" id="Q28X71"/>
<dbReference type="OMA" id="LWQKNVP"/>
<dbReference type="PhylomeDB" id="Q28X71"/>
<dbReference type="Proteomes" id="UP000001819">
    <property type="component" value="Chromosome 3"/>
</dbReference>
<dbReference type="Bgee" id="FBgn0081025">
    <property type="expression patterns" value="Expressed in female reproductive system and 2 other cell types or tissues"/>
</dbReference>
<dbReference type="GO" id="GO:0005737">
    <property type="term" value="C:cytoplasm"/>
    <property type="evidence" value="ECO:0007669"/>
    <property type="project" value="TreeGrafter"/>
</dbReference>
<dbReference type="GO" id="GO:0061657">
    <property type="term" value="F:UFM1 conjugating enzyme activity"/>
    <property type="evidence" value="ECO:0007669"/>
    <property type="project" value="InterPro"/>
</dbReference>
<dbReference type="GO" id="GO:1990592">
    <property type="term" value="P:protein K69-linked ufmylation"/>
    <property type="evidence" value="ECO:0007669"/>
    <property type="project" value="TreeGrafter"/>
</dbReference>
<dbReference type="CDD" id="cd11686">
    <property type="entry name" value="UBCc_UFC1"/>
    <property type="match status" value="1"/>
</dbReference>
<dbReference type="FunFam" id="3.10.110.10:FF:000042">
    <property type="entry name" value="Ubiquitin-fold modifier-conjugating enzyme 1"/>
    <property type="match status" value="1"/>
</dbReference>
<dbReference type="Gene3D" id="3.10.110.10">
    <property type="entry name" value="Ubiquitin Conjugating Enzyme"/>
    <property type="match status" value="1"/>
</dbReference>
<dbReference type="InterPro" id="IPR016135">
    <property type="entry name" value="UBQ-conjugating_enzyme/RWD"/>
</dbReference>
<dbReference type="InterPro" id="IPR014806">
    <property type="entry name" value="Ufc1"/>
</dbReference>
<dbReference type="PANTHER" id="PTHR12921">
    <property type="entry name" value="UBIQUITIN-FOLD MODIFIER-CONJUGATING ENZYME 1"/>
    <property type="match status" value="1"/>
</dbReference>
<dbReference type="PANTHER" id="PTHR12921:SF0">
    <property type="entry name" value="UBIQUITIN-FOLD MODIFIER-CONJUGATING ENZYME 1"/>
    <property type="match status" value="1"/>
</dbReference>
<dbReference type="Pfam" id="PF08694">
    <property type="entry name" value="UFC1"/>
    <property type="match status" value="1"/>
</dbReference>
<dbReference type="PIRSF" id="PIRSF008716">
    <property type="entry name" value="DUF1782"/>
    <property type="match status" value="1"/>
</dbReference>
<dbReference type="SUPFAM" id="SSF54495">
    <property type="entry name" value="UBC-like"/>
    <property type="match status" value="1"/>
</dbReference>